<name>NU3M_ALLCE</name>
<protein>
    <recommendedName>
        <fullName>NADH-ubiquinone oxidoreductase chain 3</fullName>
        <ecNumber>7.1.1.2</ecNumber>
    </recommendedName>
    <alternativeName>
        <fullName>NADH dehydrogenase subunit 3</fullName>
    </alternativeName>
</protein>
<keyword id="KW-0249">Electron transport</keyword>
<keyword id="KW-0472">Membrane</keyword>
<keyword id="KW-0496">Mitochondrion</keyword>
<keyword id="KW-0520">NAD</keyword>
<keyword id="KW-0679">Respiratory chain</keyword>
<keyword id="KW-1278">Translocase</keyword>
<keyword id="KW-0812">Transmembrane</keyword>
<keyword id="KW-1133">Transmembrane helix</keyword>
<keyword id="KW-0813">Transport</keyword>
<keyword id="KW-0830">Ubiquinone</keyword>
<comment type="function">
    <text evidence="1">Core subunit of the mitochondrial membrane respiratory chain NADH dehydrogenase (Complex I) that is believed to belong to the minimal assembly required for catalysis. Complex I functions in the transfer of electrons from NADH to the respiratory chain. The immediate electron acceptor for the enzyme is believed to be ubiquinone (By similarity).</text>
</comment>
<comment type="catalytic activity">
    <reaction>
        <text>a ubiquinone + NADH + 5 H(+)(in) = a ubiquinol + NAD(+) + 4 H(+)(out)</text>
        <dbReference type="Rhea" id="RHEA:29091"/>
        <dbReference type="Rhea" id="RHEA-COMP:9565"/>
        <dbReference type="Rhea" id="RHEA-COMP:9566"/>
        <dbReference type="ChEBI" id="CHEBI:15378"/>
        <dbReference type="ChEBI" id="CHEBI:16389"/>
        <dbReference type="ChEBI" id="CHEBI:17976"/>
        <dbReference type="ChEBI" id="CHEBI:57540"/>
        <dbReference type="ChEBI" id="CHEBI:57945"/>
        <dbReference type="EC" id="7.1.1.2"/>
    </reaction>
</comment>
<comment type="subcellular location">
    <subcellularLocation>
        <location evidence="1">Mitochondrion membrane</location>
        <topology evidence="1">Multi-pass membrane protein</topology>
    </subcellularLocation>
</comment>
<comment type="similarity">
    <text evidence="3">Belongs to the complex I subunit 3 family.</text>
</comment>
<reference key="1">
    <citation type="journal article" date="1996" name="Mol. Gen. Genet.">
        <title>Conservation of the organization of the mitochondrial nad3 and rps12 genes in evolutionarily distant angiosperms.</title>
        <authorList>
            <person name="Perrotta G."/>
            <person name="Regina T.M.R."/>
            <person name="Ceci L.R."/>
            <person name="Quagliariello C.C."/>
        </authorList>
    </citation>
    <scope>NUCLEOTIDE SEQUENCE [MRNA]</scope>
    <source>
        <tissue>Root</tissue>
    </source>
</reference>
<sequence length="118" mass="13791">MSEFSPIFIYLVMSLLVSLILLGLPFLFASNSSTYPEKLSAYECGFDPFGDARSRFDIRFYLVSILFIIFDLEVTFFFPWAVSLNKIDLFGFWSMMAFLLILTIGFLYEWKRGALDWE</sequence>
<proteinExistence type="inferred from homology"/>
<geneLocation type="mitochondrion"/>
<gene>
    <name type="primary">ND3</name>
    <name type="synonym">NAD3</name>
</gene>
<accession>Q96007</accession>
<organism>
    <name type="scientific">Allium cepa</name>
    <name type="common">Onion</name>
    <dbReference type="NCBI Taxonomy" id="4679"/>
    <lineage>
        <taxon>Eukaryota</taxon>
        <taxon>Viridiplantae</taxon>
        <taxon>Streptophyta</taxon>
        <taxon>Embryophyta</taxon>
        <taxon>Tracheophyta</taxon>
        <taxon>Spermatophyta</taxon>
        <taxon>Magnoliopsida</taxon>
        <taxon>Liliopsida</taxon>
        <taxon>Asparagales</taxon>
        <taxon>Amaryllidaceae</taxon>
        <taxon>Allioideae</taxon>
        <taxon>Allieae</taxon>
        <taxon>Allium</taxon>
    </lineage>
</organism>
<evidence type="ECO:0000250" key="1"/>
<evidence type="ECO:0000255" key="2"/>
<evidence type="ECO:0000305" key="3"/>
<feature type="chain" id="PRO_0000117701" description="NADH-ubiquinone oxidoreductase chain 3">
    <location>
        <begin position="1"/>
        <end position="118"/>
    </location>
</feature>
<feature type="transmembrane region" description="Helical" evidence="2">
    <location>
        <begin position="7"/>
        <end position="27"/>
    </location>
</feature>
<feature type="transmembrane region" description="Helical" evidence="2">
    <location>
        <begin position="62"/>
        <end position="82"/>
    </location>
</feature>
<feature type="transmembrane region" description="Helical" evidence="2">
    <location>
        <begin position="87"/>
        <end position="107"/>
    </location>
</feature>
<dbReference type="EC" id="7.1.1.2"/>
<dbReference type="EMBL" id="Z49772">
    <property type="protein sequence ID" value="CAA89850.1"/>
    <property type="molecule type" value="mRNA"/>
</dbReference>
<dbReference type="PIR" id="S71081">
    <property type="entry name" value="S71081"/>
</dbReference>
<dbReference type="SMR" id="Q96007"/>
<dbReference type="GO" id="GO:0031966">
    <property type="term" value="C:mitochondrial membrane"/>
    <property type="evidence" value="ECO:0007669"/>
    <property type="project" value="UniProtKB-SubCell"/>
</dbReference>
<dbReference type="GO" id="GO:0030964">
    <property type="term" value="C:NADH dehydrogenase complex"/>
    <property type="evidence" value="ECO:0007669"/>
    <property type="project" value="TreeGrafter"/>
</dbReference>
<dbReference type="GO" id="GO:0008137">
    <property type="term" value="F:NADH dehydrogenase (ubiquinone) activity"/>
    <property type="evidence" value="ECO:0007669"/>
    <property type="project" value="UniProtKB-EC"/>
</dbReference>
<dbReference type="FunFam" id="1.20.58.1610:FF:000006">
    <property type="entry name" value="NADH-ubiquinone oxidoreductase chain 3"/>
    <property type="match status" value="1"/>
</dbReference>
<dbReference type="Gene3D" id="1.20.58.1610">
    <property type="entry name" value="NADH:ubiquinone/plastoquinone oxidoreductase, chain 3"/>
    <property type="match status" value="1"/>
</dbReference>
<dbReference type="HAMAP" id="MF_01394">
    <property type="entry name" value="NDH1_NuoA"/>
    <property type="match status" value="1"/>
</dbReference>
<dbReference type="InterPro" id="IPR023043">
    <property type="entry name" value="NAD(P)H_OxRDtase_bac/plastid"/>
</dbReference>
<dbReference type="InterPro" id="IPR000440">
    <property type="entry name" value="NADH_UbQ/plastoQ_OxRdtase_su3"/>
</dbReference>
<dbReference type="InterPro" id="IPR038430">
    <property type="entry name" value="NDAH_ubi_oxred_su3_sf"/>
</dbReference>
<dbReference type="PANTHER" id="PTHR11058">
    <property type="entry name" value="NADH-UBIQUINONE OXIDOREDUCTASE CHAIN 3"/>
    <property type="match status" value="1"/>
</dbReference>
<dbReference type="PANTHER" id="PTHR11058:SF9">
    <property type="entry name" value="NADH-UBIQUINONE OXIDOREDUCTASE CHAIN 3"/>
    <property type="match status" value="1"/>
</dbReference>
<dbReference type="Pfam" id="PF00507">
    <property type="entry name" value="Oxidored_q4"/>
    <property type="match status" value="1"/>
</dbReference>